<proteinExistence type="inferred from homology"/>
<sequence length="322" mass="35237">MSELYDITIVGGGPVGLFAAFYAHLRQAKVKIIDSLPQLGGQPAILYPEKKILDVPGFTNLTGEELTQRLIEQLETFQTEICLNETVLDIVKGEEGFTITTSKAKHQTKTIIIAMGGGAFKPRALELDDAESYSNLHYHVSNINQYAGKKVVVLGGGDSAVDWALAFEKIAETSLVHRRDNFRALEHSVEELKASSVEIKTPFVPSRLVGENGKITHLEISQVKGEESQLLPLDHLFVNYGFKSSVGNLKNWGLELNRHKILVNSKQETSVPGIYAAGDCCSYEGKIDLIATGLGEAPTAVNNAINHIYPDQKVQPKHSTSL</sequence>
<comment type="catalytic activity">
    <reaction evidence="1">
        <text>2 reduced [2Fe-2S]-[ferredoxin] + NADP(+) + H(+) = 2 oxidized [2Fe-2S]-[ferredoxin] + NADPH</text>
        <dbReference type="Rhea" id="RHEA:20125"/>
        <dbReference type="Rhea" id="RHEA-COMP:10000"/>
        <dbReference type="Rhea" id="RHEA-COMP:10001"/>
        <dbReference type="ChEBI" id="CHEBI:15378"/>
        <dbReference type="ChEBI" id="CHEBI:33737"/>
        <dbReference type="ChEBI" id="CHEBI:33738"/>
        <dbReference type="ChEBI" id="CHEBI:57783"/>
        <dbReference type="ChEBI" id="CHEBI:58349"/>
        <dbReference type="EC" id="1.18.1.2"/>
    </reaction>
</comment>
<comment type="cofactor">
    <cofactor evidence="1">
        <name>FAD</name>
        <dbReference type="ChEBI" id="CHEBI:57692"/>
    </cofactor>
    <text evidence="1">Binds 1 FAD per subunit.</text>
</comment>
<comment type="subunit">
    <text evidence="1">Homodimer.</text>
</comment>
<comment type="similarity">
    <text evidence="1">Belongs to the ferredoxin--NADP reductase type 2 family.</text>
</comment>
<protein>
    <recommendedName>
        <fullName evidence="1">Ferredoxin--NADP reductase</fullName>
        <shortName evidence="1">FNR</shortName>
        <shortName evidence="1">Fd-NADP(+) reductase</shortName>
        <ecNumber evidence="1">1.18.1.2</ecNumber>
    </recommendedName>
</protein>
<gene>
    <name type="ordered locus">SGO_1284</name>
</gene>
<evidence type="ECO:0000255" key="1">
    <source>
        <dbReference type="HAMAP-Rule" id="MF_01685"/>
    </source>
</evidence>
<feature type="chain" id="PRO_0000364954" description="Ferredoxin--NADP reductase">
    <location>
        <begin position="1"/>
        <end position="322"/>
    </location>
</feature>
<feature type="binding site" evidence="1">
    <location>
        <position position="34"/>
    </location>
    <ligand>
        <name>FAD</name>
        <dbReference type="ChEBI" id="CHEBI:57692"/>
    </ligand>
</feature>
<feature type="binding site" evidence="1">
    <location>
        <position position="42"/>
    </location>
    <ligand>
        <name>FAD</name>
        <dbReference type="ChEBI" id="CHEBI:57692"/>
    </ligand>
</feature>
<feature type="binding site" evidence="1">
    <location>
        <position position="47"/>
    </location>
    <ligand>
        <name>FAD</name>
        <dbReference type="ChEBI" id="CHEBI:57692"/>
    </ligand>
</feature>
<feature type="binding site" evidence="1">
    <location>
        <position position="87"/>
    </location>
    <ligand>
        <name>FAD</name>
        <dbReference type="ChEBI" id="CHEBI:57692"/>
    </ligand>
</feature>
<feature type="binding site" evidence="1">
    <location>
        <position position="120"/>
    </location>
    <ligand>
        <name>FAD</name>
        <dbReference type="ChEBI" id="CHEBI:57692"/>
    </ligand>
</feature>
<feature type="binding site" evidence="1">
    <location>
        <position position="279"/>
    </location>
    <ligand>
        <name>FAD</name>
        <dbReference type="ChEBI" id="CHEBI:57692"/>
    </ligand>
</feature>
<feature type="binding site" evidence="1">
    <location>
        <position position="320"/>
    </location>
    <ligand>
        <name>FAD</name>
        <dbReference type="ChEBI" id="CHEBI:57692"/>
    </ligand>
</feature>
<accession>A8AXQ6</accession>
<keyword id="KW-0274">FAD</keyword>
<keyword id="KW-0285">Flavoprotein</keyword>
<keyword id="KW-0521">NADP</keyword>
<keyword id="KW-0560">Oxidoreductase</keyword>
<keyword id="KW-1185">Reference proteome</keyword>
<name>FENR_STRGC</name>
<reference key="1">
    <citation type="journal article" date="2007" name="J. Bacteriol.">
        <title>Genome-wide transcriptional changes in Streptococcus gordonii in response to competence signaling peptide.</title>
        <authorList>
            <person name="Vickerman M.M."/>
            <person name="Iobst S."/>
            <person name="Jesionowski A.M."/>
            <person name="Gill S.R."/>
        </authorList>
    </citation>
    <scope>NUCLEOTIDE SEQUENCE [LARGE SCALE GENOMIC DNA]</scope>
    <source>
        <strain>Challis / ATCC 35105 / BCRC 15272 / CH1 / DL1 / V288</strain>
    </source>
</reference>
<organism>
    <name type="scientific">Streptococcus gordonii (strain Challis / ATCC 35105 / BCRC 15272 / CH1 / DL1 / V288)</name>
    <dbReference type="NCBI Taxonomy" id="467705"/>
    <lineage>
        <taxon>Bacteria</taxon>
        <taxon>Bacillati</taxon>
        <taxon>Bacillota</taxon>
        <taxon>Bacilli</taxon>
        <taxon>Lactobacillales</taxon>
        <taxon>Streptococcaceae</taxon>
        <taxon>Streptococcus</taxon>
    </lineage>
</organism>
<dbReference type="EC" id="1.18.1.2" evidence="1"/>
<dbReference type="EMBL" id="CP000725">
    <property type="protein sequence ID" value="ABV10771.1"/>
    <property type="molecule type" value="Genomic_DNA"/>
</dbReference>
<dbReference type="RefSeq" id="WP_012000675.1">
    <property type="nucleotide sequence ID" value="NC_009785.1"/>
</dbReference>
<dbReference type="SMR" id="A8AXQ6"/>
<dbReference type="STRING" id="467705.SGO_1284"/>
<dbReference type="KEGG" id="sgo:SGO_1284"/>
<dbReference type="eggNOG" id="COG0492">
    <property type="taxonomic scope" value="Bacteria"/>
</dbReference>
<dbReference type="HOGENOM" id="CLU_031864_5_5_9"/>
<dbReference type="Proteomes" id="UP000001131">
    <property type="component" value="Chromosome"/>
</dbReference>
<dbReference type="GO" id="GO:0004324">
    <property type="term" value="F:ferredoxin-NADP+ reductase activity"/>
    <property type="evidence" value="ECO:0007669"/>
    <property type="project" value="UniProtKB-UniRule"/>
</dbReference>
<dbReference type="GO" id="GO:0050660">
    <property type="term" value="F:flavin adenine dinucleotide binding"/>
    <property type="evidence" value="ECO:0007669"/>
    <property type="project" value="UniProtKB-UniRule"/>
</dbReference>
<dbReference type="GO" id="GO:0050661">
    <property type="term" value="F:NADP binding"/>
    <property type="evidence" value="ECO:0007669"/>
    <property type="project" value="UniProtKB-UniRule"/>
</dbReference>
<dbReference type="Gene3D" id="3.50.50.60">
    <property type="entry name" value="FAD/NAD(P)-binding domain"/>
    <property type="match status" value="2"/>
</dbReference>
<dbReference type="HAMAP" id="MF_01685">
    <property type="entry name" value="FENR2"/>
    <property type="match status" value="1"/>
</dbReference>
<dbReference type="InterPro" id="IPR036188">
    <property type="entry name" value="FAD/NAD-bd_sf"/>
</dbReference>
<dbReference type="InterPro" id="IPR023753">
    <property type="entry name" value="FAD/NAD-binding_dom"/>
</dbReference>
<dbReference type="InterPro" id="IPR022890">
    <property type="entry name" value="Fd--NADP_Rdtase_type_2"/>
</dbReference>
<dbReference type="InterPro" id="IPR050097">
    <property type="entry name" value="Ferredoxin-NADP_redctase_2"/>
</dbReference>
<dbReference type="PANTHER" id="PTHR48105">
    <property type="entry name" value="THIOREDOXIN REDUCTASE 1-RELATED-RELATED"/>
    <property type="match status" value="1"/>
</dbReference>
<dbReference type="Pfam" id="PF07992">
    <property type="entry name" value="Pyr_redox_2"/>
    <property type="match status" value="1"/>
</dbReference>
<dbReference type="PRINTS" id="PR00368">
    <property type="entry name" value="FADPNR"/>
</dbReference>
<dbReference type="PRINTS" id="PR00469">
    <property type="entry name" value="PNDRDTASEII"/>
</dbReference>
<dbReference type="SUPFAM" id="SSF51905">
    <property type="entry name" value="FAD/NAD(P)-binding domain"/>
    <property type="match status" value="1"/>
</dbReference>